<feature type="chain" id="PRO_0000098221" description="10.1 kDa protein">
    <location>
        <begin position="1"/>
        <end position="90"/>
    </location>
</feature>
<proteinExistence type="predicted"/>
<protein>
    <recommendedName>
        <fullName>10.1 kDa protein</fullName>
    </recommendedName>
    <alternativeName>
        <fullName>ORF 90</fullName>
    </alternativeName>
</protein>
<reference key="1">
    <citation type="journal article" date="1991" name="J. Mol. Biol.">
        <title>DNA sequence of the filamentous bacteriophage Pf1.</title>
        <authorList>
            <person name="Hill D.F."/>
            <person name="Short N.J."/>
            <person name="Perham R.N."/>
            <person name="Petersen G.B."/>
        </authorList>
    </citation>
    <scope>NUCLEOTIDE SEQUENCE [GENOMIC DNA]</scope>
    <source>
        <strain>ATCC 25102-B1 / pf</strain>
    </source>
</reference>
<keyword id="KW-1185">Reference proteome</keyword>
<accession>P25135</accession>
<sequence>MEESGIVGFTVTGAVEKVTDFRTAPFCSQAVFAQMLGLEDITEDVVRGWVETKTIPTAKIGRRRVVNLHRIRRDLDRGKSIFCQGDYDGD</sequence>
<organismHost>
    <name type="scientific">Pseudomonas aeruginosa</name>
    <dbReference type="NCBI Taxonomy" id="287"/>
</organismHost>
<organism>
    <name type="scientific">Pseudomonas phage Pf1</name>
    <name type="common">Bacteriophage Pf1</name>
    <dbReference type="NCBI Taxonomy" id="2011081"/>
    <lineage>
        <taxon>Viruses</taxon>
        <taxon>Monodnaviria</taxon>
        <taxon>Loebvirae</taxon>
        <taxon>Hofneiviricota</taxon>
        <taxon>Faserviricetes</taxon>
        <taxon>Tubulavirales</taxon>
        <taxon>Inoviridae</taxon>
        <taxon>Primolicivirus</taxon>
    </lineage>
</organism>
<dbReference type="EMBL" id="X52107">
    <property type="protein sequence ID" value="CAA36337.1"/>
    <property type="status" value="ALT_TERM"/>
    <property type="molecule type" value="Genomic_DNA"/>
</dbReference>
<dbReference type="PIR" id="S15149">
    <property type="entry name" value="S15149"/>
</dbReference>
<dbReference type="RefSeq" id="NP_039609.1">
    <property type="nucleotide sequence ID" value="NC_001331.1"/>
</dbReference>
<dbReference type="SMR" id="P25135"/>
<dbReference type="GeneID" id="1260706"/>
<dbReference type="KEGG" id="vg:1260706"/>
<dbReference type="Proteomes" id="UP000002121">
    <property type="component" value="Genome"/>
</dbReference>
<name>VG090_BPPF1</name>